<name>DHYS_SACI2</name>
<comment type="function">
    <text evidence="1">Catalyzes the NAD-dependent oxidative cleavage of spermidine and the subsequent transfer of the butylamine moiety of spermidine to the epsilon-amino group of a specific lysine residue of the eIF-5A precursor protein to form the intermediate deoxyhypusine residue.</text>
</comment>
<comment type="catalytic activity">
    <reaction evidence="1">
        <text>[eIF5A protein]-L-lysine + spermidine = [eIF5A protein]-deoxyhypusine + propane-1,3-diamine</text>
        <dbReference type="Rhea" id="RHEA:33299"/>
        <dbReference type="Rhea" id="RHEA-COMP:10143"/>
        <dbReference type="Rhea" id="RHEA-COMP:10144"/>
        <dbReference type="ChEBI" id="CHEBI:29969"/>
        <dbReference type="ChEBI" id="CHEBI:57484"/>
        <dbReference type="ChEBI" id="CHEBI:57834"/>
        <dbReference type="ChEBI" id="CHEBI:82657"/>
        <dbReference type="EC" id="2.5.1.46"/>
    </reaction>
</comment>
<comment type="cofactor">
    <cofactor evidence="1">
        <name>NAD(+)</name>
        <dbReference type="ChEBI" id="CHEBI:57540"/>
    </cofactor>
</comment>
<comment type="pathway">
    <text evidence="1">Protein modification; eIF5A hypusination.</text>
</comment>
<comment type="similarity">
    <text evidence="1">Belongs to the deoxyhypusine synthase family.</text>
</comment>
<keyword id="KW-0386">Hypusine biosynthesis</keyword>
<keyword id="KW-0520">NAD</keyword>
<keyword id="KW-0808">Transferase</keyword>
<dbReference type="EC" id="2.5.1.46" evidence="1"/>
<dbReference type="EMBL" id="CP001399">
    <property type="protein sequence ID" value="ACP35351.1"/>
    <property type="molecule type" value="Genomic_DNA"/>
</dbReference>
<dbReference type="RefSeq" id="WP_012711264.1">
    <property type="nucleotide sequence ID" value="NC_012589.1"/>
</dbReference>
<dbReference type="SMR" id="C3MPN8"/>
<dbReference type="KEGG" id="sis:LS215_1343"/>
<dbReference type="HOGENOM" id="CLU_039781_1_0_2"/>
<dbReference type="OrthoDB" id="17730at2157"/>
<dbReference type="UniPathway" id="UPA00354"/>
<dbReference type="Proteomes" id="UP000001747">
    <property type="component" value="Chromosome"/>
</dbReference>
<dbReference type="GO" id="GO:0005737">
    <property type="term" value="C:cytoplasm"/>
    <property type="evidence" value="ECO:0007669"/>
    <property type="project" value="TreeGrafter"/>
</dbReference>
<dbReference type="GO" id="GO:0034038">
    <property type="term" value="F:deoxyhypusine synthase activity"/>
    <property type="evidence" value="ECO:0007669"/>
    <property type="project" value="UniProtKB-UniRule"/>
</dbReference>
<dbReference type="FunFam" id="3.40.910.10:FF:000007">
    <property type="entry name" value="Probable deoxyhypusine synthase"/>
    <property type="match status" value="1"/>
</dbReference>
<dbReference type="Gene3D" id="3.40.910.10">
    <property type="entry name" value="Deoxyhypusine synthase"/>
    <property type="match status" value="1"/>
</dbReference>
<dbReference type="HAMAP" id="MF_00153">
    <property type="entry name" value="DHS"/>
    <property type="match status" value="1"/>
</dbReference>
<dbReference type="InterPro" id="IPR022899">
    <property type="entry name" value="Deoxyhypus_synthase_arc"/>
</dbReference>
<dbReference type="InterPro" id="IPR002773">
    <property type="entry name" value="Deoxyhypusine_synthase"/>
</dbReference>
<dbReference type="InterPro" id="IPR036982">
    <property type="entry name" value="Deoxyhypusine_synthase_sf"/>
</dbReference>
<dbReference type="InterPro" id="IPR029035">
    <property type="entry name" value="DHS-like_NAD/FAD-binding_dom"/>
</dbReference>
<dbReference type="NCBIfam" id="NF002294">
    <property type="entry name" value="PRK01221.1"/>
    <property type="match status" value="1"/>
</dbReference>
<dbReference type="PANTHER" id="PTHR11703">
    <property type="entry name" value="DEOXYHYPUSINE SYNTHASE"/>
    <property type="match status" value="1"/>
</dbReference>
<dbReference type="PANTHER" id="PTHR11703:SF0">
    <property type="entry name" value="DEOXYHYPUSINE SYNTHASE"/>
    <property type="match status" value="1"/>
</dbReference>
<dbReference type="Pfam" id="PF01916">
    <property type="entry name" value="DS"/>
    <property type="match status" value="1"/>
</dbReference>
<dbReference type="SUPFAM" id="SSF52467">
    <property type="entry name" value="DHS-like NAD/FAD-binding domain"/>
    <property type="match status" value="1"/>
</dbReference>
<proteinExistence type="inferred from homology"/>
<sequence>MINREDLLKNPVEDIALSDLEKYSDIVNVFDKIYGFSSEGIVRGSKILKEMIKDADLRFLSFTANLVSTGLRGLFADLVKRGYFNIIVTTGGTIDHDLARSFGGVYYKGSFDIDDAMLKDLEIHRLGNVLVPFESYGKVIEEIVRKFLPEIAKDKKEIPAYELLWEFGKRISDSNSILRAAYEKKVPVIVPGIVDGSFGTNLFIQSQFLNFKINLFEDMRLIKDLVFSCKKSGALIIGGGISKHHTIWWNQFKDGLDYAVYVTTAQEYDGSLSGAKPREAISWNKIRPNAKHATIYGDATIIVPILAASLLS</sequence>
<organism>
    <name type="scientific">Saccharolobus islandicus (strain L.S.2.15 / Lassen #1)</name>
    <name type="common">Sulfolobus islandicus</name>
    <dbReference type="NCBI Taxonomy" id="429572"/>
    <lineage>
        <taxon>Archaea</taxon>
        <taxon>Thermoproteota</taxon>
        <taxon>Thermoprotei</taxon>
        <taxon>Sulfolobales</taxon>
        <taxon>Sulfolobaceae</taxon>
        <taxon>Saccharolobus</taxon>
    </lineage>
</organism>
<feature type="chain" id="PRO_1000203446" description="Probable deoxyhypusine synthase">
    <location>
        <begin position="1"/>
        <end position="312"/>
    </location>
</feature>
<feature type="active site" description="Nucleophile" evidence="1">
    <location>
        <position position="285"/>
    </location>
</feature>
<gene>
    <name evidence="1" type="primary">dys</name>
    <name type="ordered locus">LS215_1343</name>
</gene>
<evidence type="ECO:0000255" key="1">
    <source>
        <dbReference type="HAMAP-Rule" id="MF_00153"/>
    </source>
</evidence>
<reference key="1">
    <citation type="journal article" date="2009" name="Proc. Natl. Acad. Sci. U.S.A.">
        <title>Biogeography of the Sulfolobus islandicus pan-genome.</title>
        <authorList>
            <person name="Reno M.L."/>
            <person name="Held N.L."/>
            <person name="Fields C.J."/>
            <person name="Burke P.V."/>
            <person name="Whitaker R.J."/>
        </authorList>
    </citation>
    <scope>NUCLEOTIDE SEQUENCE [LARGE SCALE GENOMIC DNA]</scope>
    <source>
        <strain>L.S.2.15 / Lassen #1</strain>
    </source>
</reference>
<accession>C3MPN8</accession>
<protein>
    <recommendedName>
        <fullName evidence="1">Probable deoxyhypusine synthase</fullName>
        <shortName evidence="1">DHS</shortName>
        <ecNumber evidence="1">2.5.1.46</ecNumber>
    </recommendedName>
</protein>